<comment type="function">
    <text evidence="1">Endonuclease that specifically degrades the RNA of RNA-DNA hybrids.</text>
</comment>
<comment type="catalytic activity">
    <reaction evidence="1">
        <text>Endonucleolytic cleavage to 5'-phosphomonoester.</text>
        <dbReference type="EC" id="3.1.26.4"/>
    </reaction>
</comment>
<comment type="cofactor">
    <cofactor evidence="1">
        <name>Mg(2+)</name>
        <dbReference type="ChEBI" id="CHEBI:18420"/>
    </cofactor>
    <text evidence="1">Binds 1 Mg(2+) ion per subunit. May bind a second metal ion at a regulatory site, or after substrate binding.</text>
</comment>
<comment type="subunit">
    <text evidence="1">Monomer.</text>
</comment>
<comment type="subcellular location">
    <subcellularLocation>
        <location evidence="1">Cytoplasm</location>
    </subcellularLocation>
</comment>
<comment type="similarity">
    <text evidence="1">Belongs to the RNase H family.</text>
</comment>
<accession>B7LW89</accession>
<evidence type="ECO:0000255" key="1">
    <source>
        <dbReference type="HAMAP-Rule" id="MF_00042"/>
    </source>
</evidence>
<evidence type="ECO:0000255" key="2">
    <source>
        <dbReference type="PROSITE-ProRule" id="PRU00408"/>
    </source>
</evidence>
<name>RNH_ESCF3</name>
<reference key="1">
    <citation type="journal article" date="2009" name="PLoS Genet.">
        <title>Organised genome dynamics in the Escherichia coli species results in highly diverse adaptive paths.</title>
        <authorList>
            <person name="Touchon M."/>
            <person name="Hoede C."/>
            <person name="Tenaillon O."/>
            <person name="Barbe V."/>
            <person name="Baeriswyl S."/>
            <person name="Bidet P."/>
            <person name="Bingen E."/>
            <person name="Bonacorsi S."/>
            <person name="Bouchier C."/>
            <person name="Bouvet O."/>
            <person name="Calteau A."/>
            <person name="Chiapello H."/>
            <person name="Clermont O."/>
            <person name="Cruveiller S."/>
            <person name="Danchin A."/>
            <person name="Diard M."/>
            <person name="Dossat C."/>
            <person name="Karoui M.E."/>
            <person name="Frapy E."/>
            <person name="Garry L."/>
            <person name="Ghigo J.M."/>
            <person name="Gilles A.M."/>
            <person name="Johnson J."/>
            <person name="Le Bouguenec C."/>
            <person name="Lescat M."/>
            <person name="Mangenot S."/>
            <person name="Martinez-Jehanne V."/>
            <person name="Matic I."/>
            <person name="Nassif X."/>
            <person name="Oztas S."/>
            <person name="Petit M.A."/>
            <person name="Pichon C."/>
            <person name="Rouy Z."/>
            <person name="Ruf C.S."/>
            <person name="Schneider D."/>
            <person name="Tourret J."/>
            <person name="Vacherie B."/>
            <person name="Vallenet D."/>
            <person name="Medigue C."/>
            <person name="Rocha E.P.C."/>
            <person name="Denamur E."/>
        </authorList>
    </citation>
    <scope>NUCLEOTIDE SEQUENCE [LARGE SCALE GENOMIC DNA]</scope>
    <source>
        <strain>ATCC 35469 / DSM 13698 / BCRC 15582 / CCUG 18766 / IAM 14443 / JCM 21226 / LMG 7866 / NBRC 102419 / NCTC 12128 / CDC 0568-73</strain>
    </source>
</reference>
<gene>
    <name evidence="1" type="primary">rnhA</name>
    <name type="ordered locus">EFER_0243</name>
</gene>
<organism>
    <name type="scientific">Escherichia fergusonii (strain ATCC 35469 / DSM 13698 / CCUG 18766 / IAM 14443 / JCM 21226 / LMG 7866 / NBRC 102419 / NCTC 12128 / CDC 0568-73)</name>
    <dbReference type="NCBI Taxonomy" id="585054"/>
    <lineage>
        <taxon>Bacteria</taxon>
        <taxon>Pseudomonadati</taxon>
        <taxon>Pseudomonadota</taxon>
        <taxon>Gammaproteobacteria</taxon>
        <taxon>Enterobacterales</taxon>
        <taxon>Enterobacteriaceae</taxon>
        <taxon>Escherichia</taxon>
    </lineage>
</organism>
<dbReference type="EC" id="3.1.26.4" evidence="1"/>
<dbReference type="EMBL" id="CU928158">
    <property type="protein sequence ID" value="CAQ87812.1"/>
    <property type="molecule type" value="Genomic_DNA"/>
</dbReference>
<dbReference type="RefSeq" id="WP_000917883.1">
    <property type="nucleotide sequence ID" value="NC_011740.1"/>
</dbReference>
<dbReference type="SMR" id="B7LW89"/>
<dbReference type="GeneID" id="93777209"/>
<dbReference type="KEGG" id="efe:EFER_0243"/>
<dbReference type="HOGENOM" id="CLU_030894_6_0_6"/>
<dbReference type="OrthoDB" id="7845843at2"/>
<dbReference type="Proteomes" id="UP000000745">
    <property type="component" value="Chromosome"/>
</dbReference>
<dbReference type="GO" id="GO:0005737">
    <property type="term" value="C:cytoplasm"/>
    <property type="evidence" value="ECO:0007669"/>
    <property type="project" value="UniProtKB-SubCell"/>
</dbReference>
<dbReference type="GO" id="GO:0000287">
    <property type="term" value="F:magnesium ion binding"/>
    <property type="evidence" value="ECO:0007669"/>
    <property type="project" value="UniProtKB-UniRule"/>
</dbReference>
<dbReference type="GO" id="GO:0003676">
    <property type="term" value="F:nucleic acid binding"/>
    <property type="evidence" value="ECO:0007669"/>
    <property type="project" value="InterPro"/>
</dbReference>
<dbReference type="GO" id="GO:0004523">
    <property type="term" value="F:RNA-DNA hybrid ribonuclease activity"/>
    <property type="evidence" value="ECO:0007669"/>
    <property type="project" value="UniProtKB-UniRule"/>
</dbReference>
<dbReference type="GO" id="GO:0043137">
    <property type="term" value="P:DNA replication, removal of RNA primer"/>
    <property type="evidence" value="ECO:0007669"/>
    <property type="project" value="TreeGrafter"/>
</dbReference>
<dbReference type="CDD" id="cd09278">
    <property type="entry name" value="RNase_HI_prokaryote_like"/>
    <property type="match status" value="1"/>
</dbReference>
<dbReference type="FunFam" id="3.30.420.10:FF:000008">
    <property type="entry name" value="Ribonuclease H"/>
    <property type="match status" value="1"/>
</dbReference>
<dbReference type="Gene3D" id="3.30.420.10">
    <property type="entry name" value="Ribonuclease H-like superfamily/Ribonuclease H"/>
    <property type="match status" value="1"/>
</dbReference>
<dbReference type="HAMAP" id="MF_00042">
    <property type="entry name" value="RNase_H"/>
    <property type="match status" value="1"/>
</dbReference>
<dbReference type="InterPro" id="IPR050092">
    <property type="entry name" value="RNase_H"/>
</dbReference>
<dbReference type="InterPro" id="IPR012337">
    <property type="entry name" value="RNaseH-like_sf"/>
</dbReference>
<dbReference type="InterPro" id="IPR002156">
    <property type="entry name" value="RNaseH_domain"/>
</dbReference>
<dbReference type="InterPro" id="IPR036397">
    <property type="entry name" value="RNaseH_sf"/>
</dbReference>
<dbReference type="InterPro" id="IPR022892">
    <property type="entry name" value="RNaseHI"/>
</dbReference>
<dbReference type="NCBIfam" id="NF001236">
    <property type="entry name" value="PRK00203.1"/>
    <property type="match status" value="1"/>
</dbReference>
<dbReference type="PANTHER" id="PTHR10642">
    <property type="entry name" value="RIBONUCLEASE H1"/>
    <property type="match status" value="1"/>
</dbReference>
<dbReference type="PANTHER" id="PTHR10642:SF26">
    <property type="entry name" value="RIBONUCLEASE H1"/>
    <property type="match status" value="1"/>
</dbReference>
<dbReference type="Pfam" id="PF00075">
    <property type="entry name" value="RNase_H"/>
    <property type="match status" value="1"/>
</dbReference>
<dbReference type="SUPFAM" id="SSF53098">
    <property type="entry name" value="Ribonuclease H-like"/>
    <property type="match status" value="1"/>
</dbReference>
<dbReference type="PROSITE" id="PS50879">
    <property type="entry name" value="RNASE_H_1"/>
    <property type="match status" value="1"/>
</dbReference>
<feature type="chain" id="PRO_1000116582" description="Ribonuclease H">
    <location>
        <begin position="1"/>
        <end position="155"/>
    </location>
</feature>
<feature type="domain" description="RNase H type-1" evidence="2">
    <location>
        <begin position="1"/>
        <end position="142"/>
    </location>
</feature>
<feature type="binding site" evidence="1">
    <location>
        <position position="10"/>
    </location>
    <ligand>
        <name>Mg(2+)</name>
        <dbReference type="ChEBI" id="CHEBI:18420"/>
        <label>1</label>
    </ligand>
</feature>
<feature type="binding site" evidence="1">
    <location>
        <position position="10"/>
    </location>
    <ligand>
        <name>Mg(2+)</name>
        <dbReference type="ChEBI" id="CHEBI:18420"/>
        <label>2</label>
    </ligand>
</feature>
<feature type="binding site" evidence="1">
    <location>
        <position position="48"/>
    </location>
    <ligand>
        <name>Mg(2+)</name>
        <dbReference type="ChEBI" id="CHEBI:18420"/>
        <label>1</label>
    </ligand>
</feature>
<feature type="binding site" evidence="1">
    <location>
        <position position="70"/>
    </location>
    <ligand>
        <name>Mg(2+)</name>
        <dbReference type="ChEBI" id="CHEBI:18420"/>
        <label>1</label>
    </ligand>
</feature>
<feature type="binding site" evidence="1">
    <location>
        <position position="134"/>
    </location>
    <ligand>
        <name>Mg(2+)</name>
        <dbReference type="ChEBI" id="CHEBI:18420"/>
        <label>2</label>
    </ligand>
</feature>
<protein>
    <recommendedName>
        <fullName evidence="1">Ribonuclease H</fullName>
        <shortName evidence="1">RNase H</shortName>
        <ecNumber evidence="1">3.1.26.4</ecNumber>
    </recommendedName>
</protein>
<keyword id="KW-0963">Cytoplasm</keyword>
<keyword id="KW-0255">Endonuclease</keyword>
<keyword id="KW-0378">Hydrolase</keyword>
<keyword id="KW-0460">Magnesium</keyword>
<keyword id="KW-0479">Metal-binding</keyword>
<keyword id="KW-0540">Nuclease</keyword>
<proteinExistence type="inferred from homology"/>
<sequence length="155" mass="17597">MLKQVEIFTDGSCLGNPGPGGYGAILRYRGREKTFSAGYTRTTNNRMELMAAIVALEALKEHCEVILSTDSQYVRQGITQWIHNWKKRGWKTADKKPVKNVDLWQRLDAALGQHQIKWEWVKGHAGHPENERCDELARAAAMNPTLEDTGYQVEV</sequence>